<evidence type="ECO:0000250" key="1"/>
<evidence type="ECO:0000250" key="2">
    <source>
        <dbReference type="UniProtKB" id="Q9JMG6"/>
    </source>
</evidence>
<evidence type="ECO:0000256" key="3">
    <source>
        <dbReference type="SAM" id="MobiDB-lite"/>
    </source>
</evidence>
<evidence type="ECO:0000269" key="4">
    <source>
    </source>
</evidence>
<evidence type="ECO:0000269" key="5">
    <source>
    </source>
</evidence>
<evidence type="ECO:0000269" key="6">
    <source>
    </source>
</evidence>
<evidence type="ECO:0000269" key="7">
    <source>
    </source>
</evidence>
<evidence type="ECO:0007744" key="8">
    <source>
    </source>
</evidence>
<evidence type="ECO:0007744" key="9">
    <source>
    </source>
</evidence>
<evidence type="ECO:0007744" key="10">
    <source>
    </source>
</evidence>
<evidence type="ECO:0007744" key="11">
    <source>
    </source>
</evidence>
<evidence type="ECO:0007744" key="12">
    <source>
    </source>
</evidence>
<evidence type="ECO:0007744" key="13">
    <source>
    </source>
</evidence>
<evidence type="ECO:0007744" key="14">
    <source>
    </source>
</evidence>
<evidence type="ECO:0007744" key="15">
    <source>
    </source>
</evidence>
<sequence>MELEQREGTMAAVGFEEFSAPPGSELALPPLFGGHILESELETEVEFVSGGLGGSGLRERDEEEEAARGRRRRQRELNRRKYQALGRRCREIEQVNERVLNRLHQVQRITRRLQQERRFLMRVLDSYGDDYRASQFTIVLEDEGSQGTDAPTPGNAENEPPEKETLSPPRRTPAPPEPGSPAPGEGPSGRKRRRVPRDGRRAGNALTPELAPVQIKVEEDFGFEADEALDSSWVSRGPDKLLPYPTLASPASD</sequence>
<dbReference type="EMBL" id="AF052052">
    <property type="protein sequence ID" value="AAD45182.1"/>
    <property type="molecule type" value="mRNA"/>
</dbReference>
<dbReference type="EMBL" id="AC012314">
    <property type="status" value="NOT_ANNOTATED_CDS"/>
    <property type="molecule type" value="Genomic_DNA"/>
</dbReference>
<dbReference type="EMBL" id="AC245052">
    <property type="status" value="NOT_ANNOTATED_CDS"/>
    <property type="molecule type" value="Genomic_DNA"/>
</dbReference>
<dbReference type="EMBL" id="CH471135">
    <property type="protein sequence ID" value="EAW72186.1"/>
    <property type="molecule type" value="Genomic_DNA"/>
</dbReference>
<dbReference type="EMBL" id="BC001728">
    <property type="status" value="NOT_ANNOTATED_CDS"/>
    <property type="molecule type" value="mRNA"/>
</dbReference>
<dbReference type="EMBL" id="BC004281">
    <property type="protein sequence ID" value="AAH04281.1"/>
    <property type="molecule type" value="mRNA"/>
</dbReference>
<dbReference type="EMBL" id="BC007776">
    <property type="protein sequence ID" value="AAH07776.1"/>
    <property type="molecule type" value="mRNA"/>
</dbReference>
<dbReference type="CCDS" id="CCDS12878.1">
    <molecule id="P0C1Z6-1"/>
</dbReference>
<dbReference type="CCDS" id="CCDS82396.1">
    <molecule id="P0C1Z6-2"/>
</dbReference>
<dbReference type="RefSeq" id="NP_001308721.1">
    <molecule id="P0C1Z6-2"/>
    <property type="nucleotide sequence ID" value="NM_001321792.2"/>
</dbReference>
<dbReference type="RefSeq" id="NP_037474.1">
    <molecule id="P0C1Z6-1"/>
    <property type="nucleotide sequence ID" value="NM_013342.4"/>
</dbReference>
<dbReference type="SMR" id="P0C1Z6"/>
<dbReference type="BioGRID" id="118931">
    <property type="interactions" value="180"/>
</dbReference>
<dbReference type="ComplexPortal" id="CPX-846">
    <property type="entry name" value="INO80 chromatin remodeling complex"/>
</dbReference>
<dbReference type="FunCoup" id="P0C1Z6">
    <property type="interactions" value="2156"/>
</dbReference>
<dbReference type="IntAct" id="P0C1Z6">
    <property type="interactions" value="122"/>
</dbReference>
<dbReference type="MINT" id="P0C1Z6"/>
<dbReference type="STRING" id="9606.ENSP00000375639"/>
<dbReference type="GlyGen" id="P0C1Z6">
    <property type="glycosylation" value="1 site"/>
</dbReference>
<dbReference type="iPTMnet" id="P0C1Z6"/>
<dbReference type="PhosphoSitePlus" id="P0C1Z6"/>
<dbReference type="BioMuta" id="TFPT"/>
<dbReference type="DMDM" id="126352246"/>
<dbReference type="jPOST" id="P0C1Z6"/>
<dbReference type="MassIVE" id="P0C1Z6"/>
<dbReference type="PaxDb" id="9606-ENSP00000375639"/>
<dbReference type="PeptideAtlas" id="P0C1Z6"/>
<dbReference type="ProteomicsDB" id="33890"/>
<dbReference type="ProteomicsDB" id="52299"/>
<dbReference type="Pumba" id="P0C1Z6"/>
<dbReference type="Antibodypedia" id="32793">
    <property type="antibodies" value="156 antibodies from 28 providers"/>
</dbReference>
<dbReference type="DNASU" id="29844"/>
<dbReference type="Ensembl" id="ENST00000391758.5">
    <molecule id="P0C1Z6-2"/>
    <property type="protein sequence ID" value="ENSP00000375638.1"/>
    <property type="gene ID" value="ENSG00000105619.14"/>
</dbReference>
<dbReference type="Ensembl" id="ENST00000391759.6">
    <molecule id="P0C1Z6-1"/>
    <property type="protein sequence ID" value="ENSP00000375639.1"/>
    <property type="gene ID" value="ENSG00000105619.14"/>
</dbReference>
<dbReference type="Ensembl" id="ENST00000611344.4">
    <molecule id="P0C1Z6-2"/>
    <property type="protein sequence ID" value="ENSP00000484338.1"/>
    <property type="gene ID" value="ENSG00000276504.4"/>
</dbReference>
<dbReference type="Ensembl" id="ENST00000611514.1">
    <molecule id="P0C1Z6-1"/>
    <property type="protein sequence ID" value="ENSP00000481443.1"/>
    <property type="gene ID" value="ENSG00000278161.1"/>
</dbReference>
<dbReference type="Ensembl" id="ENST00000611935.1">
    <molecule id="P0C1Z6-1"/>
    <property type="protein sequence ID" value="ENSP00000482185.1"/>
    <property type="gene ID" value="ENSG00000276022.1"/>
</dbReference>
<dbReference type="Ensembl" id="ENST00000614788.1">
    <molecule id="P0C1Z6-1"/>
    <property type="protein sequence ID" value="ENSP00000482785.1"/>
    <property type="gene ID" value="ENSG00000273833.1"/>
</dbReference>
<dbReference type="Ensembl" id="ENST00000615534.1">
    <molecule id="P0C1Z6-1"/>
    <property type="protein sequence ID" value="ENSP00000480353.1"/>
    <property type="gene ID" value="ENSG00000274073.1"/>
</dbReference>
<dbReference type="Ensembl" id="ENST00000615620.1">
    <molecule id="P0C1Z6-1"/>
    <property type="protein sequence ID" value="ENSP00000483971.1"/>
    <property type="gene ID" value="ENSG00000276263.1"/>
</dbReference>
<dbReference type="Ensembl" id="ENST00000616277.1">
    <molecule id="P0C1Z6-1"/>
    <property type="protein sequence ID" value="ENSP00000483417.1"/>
    <property type="gene ID" value="ENSG00000276296.1"/>
</dbReference>
<dbReference type="Ensembl" id="ENST00000616798.4">
    <molecule id="P0C1Z6-1"/>
    <property type="protein sequence ID" value="ENSP00000480169.1"/>
    <property type="gene ID" value="ENSG00000276504.4"/>
</dbReference>
<dbReference type="Ensembl" id="ENST00000617348.1">
    <molecule id="P0C1Z6-1"/>
    <property type="protein sequence ID" value="ENSP00000477775.1"/>
    <property type="gene ID" value="ENSG00000275086.1"/>
</dbReference>
<dbReference type="Ensembl" id="ENST00000619581.1">
    <molecule id="P0C1Z6-1"/>
    <property type="protein sequence ID" value="ENSP00000484685.1"/>
    <property type="gene ID" value="ENSG00000276323.1"/>
</dbReference>
<dbReference type="GeneID" id="29844"/>
<dbReference type="KEGG" id="hsa:29844"/>
<dbReference type="MANE-Select" id="ENST00000391759.6">
    <property type="protein sequence ID" value="ENSP00000375639.1"/>
    <property type="RefSeq nucleotide sequence ID" value="NM_013342.4"/>
    <property type="RefSeq protein sequence ID" value="NP_037474.1"/>
</dbReference>
<dbReference type="UCSC" id="uc010yej.1">
    <molecule id="P0C1Z6-1"/>
    <property type="organism name" value="human"/>
</dbReference>
<dbReference type="UCSC" id="uc061cmq.1">
    <property type="organism name" value="human"/>
</dbReference>
<dbReference type="AGR" id="HGNC:13630"/>
<dbReference type="CTD" id="29844"/>
<dbReference type="DisGeNET" id="29844"/>
<dbReference type="GeneCards" id="TFPT"/>
<dbReference type="HGNC" id="HGNC:13630">
    <property type="gene designation" value="TFPT"/>
</dbReference>
<dbReference type="HPA" id="ENSG00000105619">
    <property type="expression patterns" value="Tissue enriched (brain)"/>
</dbReference>
<dbReference type="MIM" id="609519">
    <property type="type" value="gene"/>
</dbReference>
<dbReference type="neXtProt" id="NX_P0C1Z6"/>
<dbReference type="OpenTargets" id="ENSG00000105619"/>
<dbReference type="PharmGKB" id="PA37802"/>
<dbReference type="VEuPathDB" id="HostDB:ENSG00000105619"/>
<dbReference type="eggNOG" id="ENOG502RHUP">
    <property type="taxonomic scope" value="Eukaryota"/>
</dbReference>
<dbReference type="GeneTree" id="ENSGT00390000016605"/>
<dbReference type="InParanoid" id="P0C1Z6"/>
<dbReference type="OMA" id="WRCKEIE"/>
<dbReference type="OrthoDB" id="10070927at2759"/>
<dbReference type="PAN-GO" id="P0C1Z6">
    <property type="GO annotations" value="4 GO annotations based on evolutionary models"/>
</dbReference>
<dbReference type="PhylomeDB" id="P0C1Z6"/>
<dbReference type="TreeFam" id="TF338152"/>
<dbReference type="PathwayCommons" id="P0C1Z6"/>
<dbReference type="Reactome" id="R-HSA-5689603">
    <property type="pathway name" value="UCH proteinases"/>
</dbReference>
<dbReference type="Reactome" id="R-HSA-5696394">
    <property type="pathway name" value="DNA Damage Recognition in GG-NER"/>
</dbReference>
<dbReference type="SignaLink" id="P0C1Z6"/>
<dbReference type="SIGNOR" id="P0C1Z6"/>
<dbReference type="BioGRID-ORCS" id="29844">
    <property type="hits" value="82 hits in 1172 CRISPR screens"/>
</dbReference>
<dbReference type="ChiTaRS" id="TFPT">
    <property type="organism name" value="human"/>
</dbReference>
<dbReference type="GeneWiki" id="TFPT"/>
<dbReference type="GenomeRNAi" id="29844"/>
<dbReference type="Pharos" id="P0C1Z6">
    <property type="development level" value="Tbio"/>
</dbReference>
<dbReference type="PRO" id="PR:P0C1Z6"/>
<dbReference type="Proteomes" id="UP000005640">
    <property type="component" value="Chromosome 19"/>
</dbReference>
<dbReference type="RNAct" id="P0C1Z6">
    <property type="molecule type" value="protein"/>
</dbReference>
<dbReference type="Bgee" id="ENSG00000105619">
    <property type="expression patterns" value="Expressed in amygdala and 98 other cell types or tissues"/>
</dbReference>
<dbReference type="ExpressionAtlas" id="P0C1Z6">
    <property type="expression patterns" value="baseline and differential"/>
</dbReference>
<dbReference type="GO" id="GO:0005737">
    <property type="term" value="C:cytoplasm"/>
    <property type="evidence" value="ECO:0000250"/>
    <property type="project" value="UniProtKB"/>
</dbReference>
<dbReference type="GO" id="GO:0031011">
    <property type="term" value="C:Ino80 complex"/>
    <property type="evidence" value="ECO:0000314"/>
    <property type="project" value="UniProtKB"/>
</dbReference>
<dbReference type="GO" id="GO:0005654">
    <property type="term" value="C:nucleoplasm"/>
    <property type="evidence" value="ECO:0000314"/>
    <property type="project" value="HPA"/>
</dbReference>
<dbReference type="GO" id="GO:0005634">
    <property type="term" value="C:nucleus"/>
    <property type="evidence" value="ECO:0000250"/>
    <property type="project" value="UniProtKB"/>
</dbReference>
<dbReference type="GO" id="GO:0003677">
    <property type="term" value="F:DNA binding"/>
    <property type="evidence" value="ECO:0000250"/>
    <property type="project" value="UniProtKB"/>
</dbReference>
<dbReference type="GO" id="GO:0097190">
    <property type="term" value="P:apoptotic signaling pathway"/>
    <property type="evidence" value="ECO:0000314"/>
    <property type="project" value="UniProtKB"/>
</dbReference>
<dbReference type="GO" id="GO:0006338">
    <property type="term" value="P:chromatin remodeling"/>
    <property type="evidence" value="ECO:0000314"/>
    <property type="project" value="ComplexPortal"/>
</dbReference>
<dbReference type="GO" id="GO:0006310">
    <property type="term" value="P:DNA recombination"/>
    <property type="evidence" value="ECO:0007669"/>
    <property type="project" value="UniProtKB-KW"/>
</dbReference>
<dbReference type="GO" id="GO:0006281">
    <property type="term" value="P:DNA repair"/>
    <property type="evidence" value="ECO:0007669"/>
    <property type="project" value="UniProtKB-KW"/>
</dbReference>
<dbReference type="GO" id="GO:0043065">
    <property type="term" value="P:positive regulation of apoptotic process"/>
    <property type="evidence" value="ECO:0000318"/>
    <property type="project" value="GO_Central"/>
</dbReference>
<dbReference type="GO" id="GO:0045739">
    <property type="term" value="P:positive regulation of DNA repair"/>
    <property type="evidence" value="ECO:0000266"/>
    <property type="project" value="ComplexPortal"/>
</dbReference>
<dbReference type="GO" id="GO:0045893">
    <property type="term" value="P:positive regulation of DNA-templated transcription"/>
    <property type="evidence" value="ECO:0000315"/>
    <property type="project" value="ComplexPortal"/>
</dbReference>
<dbReference type="GO" id="GO:1904507">
    <property type="term" value="P:positive regulation of telomere maintenance in response to DNA damage"/>
    <property type="evidence" value="ECO:0000266"/>
    <property type="project" value="ComplexPortal"/>
</dbReference>
<dbReference type="GO" id="GO:0051726">
    <property type="term" value="P:regulation of cell cycle"/>
    <property type="evidence" value="ECO:0000315"/>
    <property type="project" value="ComplexPortal"/>
</dbReference>
<dbReference type="GO" id="GO:0033044">
    <property type="term" value="P:regulation of chromosome organization"/>
    <property type="evidence" value="ECO:0000315"/>
    <property type="project" value="ComplexPortal"/>
</dbReference>
<dbReference type="GO" id="GO:0006282">
    <property type="term" value="P:regulation of DNA repair"/>
    <property type="evidence" value="ECO:0000266"/>
    <property type="project" value="ComplexPortal"/>
</dbReference>
<dbReference type="GO" id="GO:0006275">
    <property type="term" value="P:regulation of DNA replication"/>
    <property type="evidence" value="ECO:0000315"/>
    <property type="project" value="ComplexPortal"/>
</dbReference>
<dbReference type="GO" id="GO:0060382">
    <property type="term" value="P:regulation of DNA strand elongation"/>
    <property type="evidence" value="ECO:0000315"/>
    <property type="project" value="ComplexPortal"/>
</dbReference>
<dbReference type="GO" id="GO:0045995">
    <property type="term" value="P:regulation of embryonic development"/>
    <property type="evidence" value="ECO:0000266"/>
    <property type="project" value="ComplexPortal"/>
</dbReference>
<dbReference type="GO" id="GO:0000723">
    <property type="term" value="P:telomere maintenance"/>
    <property type="evidence" value="ECO:0000266"/>
    <property type="project" value="ComplexPortal"/>
</dbReference>
<dbReference type="InterPro" id="IPR056513">
    <property type="entry name" value="INO80F"/>
</dbReference>
<dbReference type="InterPro" id="IPR033555">
    <property type="entry name" value="TFPT"/>
</dbReference>
<dbReference type="PANTHER" id="PTHR35084">
    <property type="entry name" value="TCF3 FUSION PARTNER"/>
    <property type="match status" value="1"/>
</dbReference>
<dbReference type="PANTHER" id="PTHR35084:SF1">
    <property type="entry name" value="TCF3 FUSION PARTNER"/>
    <property type="match status" value="1"/>
</dbReference>
<dbReference type="Pfam" id="PF24245">
    <property type="entry name" value="INO80F"/>
    <property type="match status" value="1"/>
</dbReference>
<comment type="function">
    <text>Appears to promote apoptosis in a p53/TP53-independent manner.</text>
</comment>
<comment type="function">
    <text>Putative regulatory component of the chromatin remodeling INO80 complex which is involved in transcriptional regulation, DNA replication and probably DNA repair.</text>
</comment>
<comment type="subunit">
    <text evidence="1 2 5 6 7">Interacts with NOL3; translocates NOL3 into the nucleus and negatively regulated TFPT-induced cell death (By similarity). Component of the chromatin remodeling INO80 complex; specifically part of a complex module associated with the N-terminus of INO80.</text>
</comment>
<comment type="interaction">
    <interactant intactId="EBI-1245626">
        <id>P0C1Z6</id>
    </interactant>
    <interactant intactId="EBI-741214">
        <id>Q9UFG5</id>
        <label>C19orf25</label>
    </interactant>
    <organismsDiffer>false</organismsDiffer>
    <experiments>3</experiments>
</comment>
<comment type="interaction">
    <interactant intactId="EBI-1245626">
        <id>P0C1Z6</id>
    </interactant>
    <interactant intactId="EBI-10961624">
        <id>Q2TAC2-2</id>
        <label>CCDC57</label>
    </interactant>
    <organismsDiffer>false</organismsDiffer>
    <experiments>3</experiments>
</comment>
<comment type="interaction">
    <interactant intactId="EBI-1245626">
        <id>P0C1Z6</id>
    </interactant>
    <interactant intactId="EBI-748961">
        <id>O95273</id>
        <label>CCNDBP1</label>
    </interactant>
    <organismsDiffer>false</organismsDiffer>
    <experiments>6</experiments>
</comment>
<comment type="interaction">
    <interactant intactId="EBI-1245626">
        <id>P0C1Z6</id>
    </interactant>
    <interactant intactId="EBI-2873130">
        <id>P51911</id>
        <label>CNN1</label>
    </interactant>
    <organismsDiffer>false</organismsDiffer>
    <experiments>4</experiments>
</comment>
<comment type="interaction">
    <interactant intactId="EBI-1245626">
        <id>P0C1Z6</id>
    </interactant>
    <interactant intactId="EBI-742054">
        <id>Q96D03</id>
        <label>DDIT4L</label>
    </interactant>
    <organismsDiffer>false</organismsDiffer>
    <experiments>4</experiments>
</comment>
<comment type="interaction">
    <interactant intactId="EBI-1245626">
        <id>P0C1Z6</id>
    </interactant>
    <interactant intactId="EBI-1245604">
        <id>Q96CJ1</id>
        <label>EAF2</label>
    </interactant>
    <organismsDiffer>false</organismsDiffer>
    <experiments>4</experiments>
</comment>
<comment type="interaction">
    <interactant intactId="EBI-1245626">
        <id>P0C1Z6</id>
    </interactant>
    <interactant intactId="EBI-714158">
        <id>Q13526</id>
        <label>PIN1</label>
    </interactant>
    <organismsDiffer>false</organismsDiffer>
    <experiments>3</experiments>
</comment>
<comment type="interaction">
    <interactant intactId="EBI-1245626">
        <id>P0C1Z6</id>
    </interactant>
    <interactant intactId="EBI-372273">
        <id>P20618</id>
        <label>PSMB1</label>
    </interactant>
    <organismsDiffer>false</organismsDiffer>
    <experiments>3</experiments>
</comment>
<comment type="interaction">
    <interactant intactId="EBI-1245626">
        <id>P0C1Z6</id>
    </interactant>
    <interactant intactId="EBI-992580">
        <id>Q13188</id>
        <label>STK3</label>
    </interactant>
    <organismsDiffer>false</organismsDiffer>
    <experiments>3</experiments>
</comment>
<comment type="interaction">
    <interactant intactId="EBI-1245626">
        <id>P0C1Z6</id>
    </interactant>
    <interactant intactId="EBI-1105213">
        <id>Q9UBB9</id>
        <label>TFIP11</label>
    </interactant>
    <organismsDiffer>false</organismsDiffer>
    <experiments>5</experiments>
</comment>
<comment type="interaction">
    <interactant intactId="EBI-1245626">
        <id>P0C1Z6</id>
    </interactant>
    <interactant intactId="EBI-12123928">
        <id>P09493-10</id>
        <label>TPM1</label>
    </interactant>
    <organismsDiffer>false</organismsDiffer>
    <experiments>3</experiments>
</comment>
<comment type="interaction">
    <interactant intactId="EBI-1245626">
        <id>P0C1Z6</id>
    </interactant>
    <interactant intactId="EBI-10977815">
        <id>P07951-2</id>
        <label>TPM2</label>
    </interactant>
    <organismsDiffer>false</organismsDiffer>
    <experiments>3</experiments>
</comment>
<comment type="interaction">
    <interactant intactId="EBI-1245626">
        <id>P0C1Z6</id>
    </interactant>
    <interactant intactId="EBI-355607">
        <id>P06753</id>
        <label>TPM3</label>
    </interactant>
    <organismsDiffer>false</organismsDiffer>
    <experiments>14</experiments>
</comment>
<comment type="interaction">
    <interactant intactId="EBI-1245626">
        <id>P0C1Z6</id>
    </interactant>
    <interactant intactId="EBI-359224">
        <id>Q13077</id>
        <label>TRAF1</label>
    </interactant>
    <organismsDiffer>false</organismsDiffer>
    <experiments>4</experiments>
</comment>
<comment type="interaction">
    <interactant intactId="EBI-1245626">
        <id>P0C1Z6</id>
    </interactant>
    <interactant intactId="EBI-1051183">
        <id>Q9Y5K5</id>
        <label>UCHL5</label>
    </interactant>
    <organismsDiffer>false</organismsDiffer>
    <experiments>6</experiments>
</comment>
<comment type="interaction">
    <interactant intactId="EBI-10178002">
        <id>P0C1Z6-2</id>
    </interactant>
    <interactant intactId="EBI-6657981">
        <id>Q504U0</id>
        <label>C4orf46</label>
    </interactant>
    <organismsDiffer>false</organismsDiffer>
    <experiments>3</experiments>
</comment>
<comment type="interaction">
    <interactant intactId="EBI-10178002">
        <id>P0C1Z6-2</id>
    </interactant>
    <interactant intactId="EBI-5278764">
        <id>Q96GN5</id>
        <label>CDCA7L</label>
    </interactant>
    <organismsDiffer>false</organismsDiffer>
    <experiments>3</experiments>
</comment>
<comment type="interaction">
    <interactant intactId="EBI-10178002">
        <id>P0C1Z6-2</id>
    </interactant>
    <interactant intactId="EBI-748597">
        <id>Q05D60</id>
        <label>DEUP1</label>
    </interactant>
    <organismsDiffer>false</organismsDiffer>
    <experiments>3</experiments>
</comment>
<comment type="interaction">
    <interactant intactId="EBI-10178002">
        <id>P0C1Z6-2</id>
    </interactant>
    <interactant intactId="EBI-740680">
        <id>Q8WWB3</id>
        <label>DYDC1</label>
    </interactant>
    <organismsDiffer>false</organismsDiffer>
    <experiments>3</experiments>
</comment>
<comment type="interaction">
    <interactant intactId="EBI-10178002">
        <id>P0C1Z6-2</id>
    </interactant>
    <interactant intactId="EBI-10178036">
        <id>Q96C92-2</id>
        <label>ENTR1</label>
    </interactant>
    <organismsDiffer>false</organismsDiffer>
    <experiments>3</experiments>
</comment>
<comment type="interaction">
    <interactant intactId="EBI-10178002">
        <id>P0C1Z6-2</id>
    </interactant>
    <interactant intactId="EBI-2514791">
        <id>Q96CS2</id>
        <label>HAUS1</label>
    </interactant>
    <organismsDiffer>false</organismsDiffer>
    <experiments>3</experiments>
</comment>
<comment type="interaction">
    <interactant intactId="EBI-10178002">
        <id>P0C1Z6-2</id>
    </interactant>
    <interactant intactId="EBI-742756">
        <id>P08727</id>
        <label>KRT19</label>
    </interactant>
    <organismsDiffer>false</organismsDiffer>
    <experiments>3</experiments>
</comment>
<comment type="interaction">
    <interactant intactId="EBI-10178002">
        <id>P0C1Z6-2</id>
    </interactant>
    <interactant intactId="EBI-739696">
        <id>P25791</id>
        <label>LMO2</label>
    </interactant>
    <organismsDiffer>false</organismsDiffer>
    <experiments>3</experiments>
</comment>
<comment type="interaction">
    <interactant intactId="EBI-10178002">
        <id>P0C1Z6-2</id>
    </interactant>
    <interactant intactId="EBI-696621">
        <id>P11309</id>
        <label>PIM1</label>
    </interactant>
    <organismsDiffer>false</organismsDiffer>
    <experiments>3</experiments>
</comment>
<comment type="interaction">
    <interactant intactId="EBI-10178002">
        <id>P0C1Z6-2</id>
    </interactant>
    <interactant intactId="EBI-749285">
        <id>Q15311</id>
        <label>RALBP1</label>
    </interactant>
    <organismsDiffer>false</organismsDiffer>
    <experiments>5</experiments>
</comment>
<comment type="interaction">
    <interactant intactId="EBI-10178002">
        <id>P0C1Z6-2</id>
    </interactant>
    <interactant intactId="EBI-1050213">
        <id>Q96KN7</id>
        <label>RPGRIP1</label>
    </interactant>
    <organismsDiffer>false</organismsDiffer>
    <experiments>3</experiments>
</comment>
<comment type="interaction">
    <interactant intactId="EBI-10178002">
        <id>P0C1Z6-2</id>
    </interactant>
    <interactant intactId="EBI-747225">
        <id>Q59EK9</id>
        <label>RUNDC3A</label>
    </interactant>
    <organismsDiffer>false</organismsDiffer>
    <experiments>3</experiments>
</comment>
<comment type="interaction">
    <interactant intactId="EBI-10178002">
        <id>P0C1Z6-2</id>
    </interactant>
    <interactant intactId="EBI-992580">
        <id>Q13188</id>
        <label>STK3</label>
    </interactant>
    <organismsDiffer>false</organismsDiffer>
    <experiments>3</experiments>
</comment>
<comment type="interaction">
    <interactant intactId="EBI-10178002">
        <id>P0C1Z6-2</id>
    </interactant>
    <interactant intactId="EBI-1105213">
        <id>Q9UBB9</id>
        <label>TFIP11</label>
    </interactant>
    <organismsDiffer>false</organismsDiffer>
    <experiments>3</experiments>
</comment>
<comment type="interaction">
    <interactant intactId="EBI-10178002">
        <id>P0C1Z6-2</id>
    </interactant>
    <interactant intactId="EBI-10196387">
        <id>P09493-5</id>
        <label>TPM1</label>
    </interactant>
    <organismsDiffer>false</organismsDiffer>
    <experiments>3</experiments>
</comment>
<comment type="interaction">
    <interactant intactId="EBI-10178002">
        <id>P0C1Z6-2</id>
    </interactant>
    <interactant intactId="EBI-355607">
        <id>P06753</id>
        <label>TPM3</label>
    </interactant>
    <organismsDiffer>false</organismsDiffer>
    <experiments>3</experiments>
</comment>
<comment type="interaction">
    <interactant intactId="EBI-10178002">
        <id>P0C1Z6-2</id>
    </interactant>
    <interactant intactId="EBI-10184033">
        <id>Q5VU62</id>
        <label>TPM3</label>
    </interactant>
    <organismsDiffer>false</organismsDiffer>
    <experiments>3</experiments>
</comment>
<comment type="subcellular location">
    <subcellularLocation>
        <location evidence="6">Nucleus</location>
    </subcellularLocation>
</comment>
<comment type="alternative products">
    <event type="alternative splicing"/>
    <isoform>
        <id>P0C1Z6-1</id>
        <name>1</name>
        <sequence type="displayed"/>
    </isoform>
    <isoform>
        <id>P0C1Z6-2</id>
        <name>2</name>
        <sequence type="described" ref="VSP_058937"/>
    </isoform>
</comment>
<comment type="disease">
    <text evidence="4">A chromosomal aberration involving TFPT is a cause of pre-B-cell acute lymphoblastic leukemia (B-ALL). Inversion inv(19)(p13;q13) with TCF3.</text>
</comment>
<comment type="online information" name="Atlas of Genetics and Cytogenetics in Oncology and Haematology">
    <link uri="https://atlasgeneticsoncology.org/gene/495/TFPT"/>
</comment>
<proteinExistence type="evidence at protein level"/>
<protein>
    <recommendedName>
        <fullName>TCF3 fusion partner</fullName>
    </recommendedName>
    <alternativeName>
        <fullName>INO80 complex subunit F</fullName>
    </alternativeName>
    <alternativeName>
        <fullName>Protein FB1</fullName>
    </alternativeName>
</protein>
<organism>
    <name type="scientific">Homo sapiens</name>
    <name type="common">Human</name>
    <dbReference type="NCBI Taxonomy" id="9606"/>
    <lineage>
        <taxon>Eukaryota</taxon>
        <taxon>Metazoa</taxon>
        <taxon>Chordata</taxon>
        <taxon>Craniata</taxon>
        <taxon>Vertebrata</taxon>
        <taxon>Euteleostomi</taxon>
        <taxon>Mammalia</taxon>
        <taxon>Eutheria</taxon>
        <taxon>Euarchontoglires</taxon>
        <taxon>Primates</taxon>
        <taxon>Haplorrhini</taxon>
        <taxon>Catarrhini</taxon>
        <taxon>Hominidae</taxon>
        <taxon>Homo</taxon>
    </lineage>
</organism>
<feature type="chain" id="PRO_0000254581" description="TCF3 fusion partner">
    <location>
        <begin position="1"/>
        <end position="253"/>
    </location>
</feature>
<feature type="region of interest" description="Disordered" evidence="3">
    <location>
        <begin position="49"/>
        <end position="72"/>
    </location>
</feature>
<feature type="region of interest" description="Disordered" evidence="3">
    <location>
        <begin position="142"/>
        <end position="211"/>
    </location>
</feature>
<feature type="region of interest" description="Disordered" evidence="3">
    <location>
        <begin position="234"/>
        <end position="253"/>
    </location>
</feature>
<feature type="compositionally biased region" description="Pro residues" evidence="3">
    <location>
        <begin position="170"/>
        <end position="181"/>
    </location>
</feature>
<feature type="modified residue" description="Phosphoserine" evidence="13">
    <location>
        <position position="167"/>
    </location>
</feature>
<feature type="modified residue" description="Phosphothreonine" evidence="14">
    <location>
        <position position="172"/>
    </location>
</feature>
<feature type="modified residue" description="Phosphoserine" evidence="8 9 10 11 13 14">
    <location>
        <position position="180"/>
    </location>
</feature>
<feature type="modified residue" description="Phosphoserine" evidence="10">
    <location>
        <position position="188"/>
    </location>
</feature>
<feature type="modified residue" description="Phosphothreonine" evidence="11 13">
    <location>
        <position position="207"/>
    </location>
</feature>
<feature type="modified residue" description="Phosphoserine" evidence="8 10 11 12 13">
    <location>
        <position position="249"/>
    </location>
</feature>
<feature type="modified residue" description="Phosphoserine" evidence="8 10 11 12 13 14">
    <location>
        <position position="252"/>
    </location>
</feature>
<feature type="cross-link" description="Glycyl lysine isopeptide (Lys-Gly) (interchain with G-Cter in SUMO2)" evidence="15">
    <location>
        <position position="216"/>
    </location>
</feature>
<feature type="splice variant" id="VSP_058937" description="In isoform 2.">
    <location>
        <begin position="1"/>
        <end position="9"/>
    </location>
</feature>
<accession>P0C1Z6</accession>
<accession>G5E9B5</accession>
<keyword id="KW-0025">Alternative splicing</keyword>
<keyword id="KW-0053">Apoptosis</keyword>
<keyword id="KW-0160">Chromosomal rearrangement</keyword>
<keyword id="KW-0227">DNA damage</keyword>
<keyword id="KW-0233">DNA recombination</keyword>
<keyword id="KW-0234">DNA repair</keyword>
<keyword id="KW-1017">Isopeptide bond</keyword>
<keyword id="KW-0539">Nucleus</keyword>
<keyword id="KW-0597">Phosphoprotein</keyword>
<keyword id="KW-1267">Proteomics identification</keyword>
<keyword id="KW-0656">Proto-oncogene</keyword>
<keyword id="KW-1185">Reference proteome</keyword>
<keyword id="KW-0804">Transcription</keyword>
<keyword id="KW-0805">Transcription regulation</keyword>
<keyword id="KW-0832">Ubl conjugation</keyword>
<name>TFPT_HUMAN</name>
<gene>
    <name type="primary">TFPT</name>
    <name type="synonym">INO80F</name>
</gene>
<reference key="1">
    <citation type="journal article" date="1999" name="Leukemia">
        <title>Identification of a novel molecular partner of the E2A gene in childhood leukemia.</title>
        <authorList>
            <person name="Brambillasca F."/>
            <person name="Mosna G."/>
            <person name="Colombo M."/>
            <person name="Rivolta A."/>
            <person name="Caslini C."/>
            <person name="Minuzzo M."/>
            <person name="Giudici G."/>
            <person name="Mizzi L."/>
            <person name="Biondi A."/>
            <person name="Privitera E."/>
        </authorList>
    </citation>
    <scope>NUCLEOTIDE SEQUENCE [MRNA] (ISOFORM 1)</scope>
    <scope>CHROMOSOMAL TRANSLOCATION WITH TCF3</scope>
    <source>
        <tissue>Leukemia</tissue>
    </source>
</reference>
<reference key="2">
    <citation type="journal article" date="2004" name="Nature">
        <title>The DNA sequence and biology of human chromosome 19.</title>
        <authorList>
            <person name="Grimwood J."/>
            <person name="Gordon L.A."/>
            <person name="Olsen A.S."/>
            <person name="Terry A."/>
            <person name="Schmutz J."/>
            <person name="Lamerdin J.E."/>
            <person name="Hellsten U."/>
            <person name="Goodstein D."/>
            <person name="Couronne O."/>
            <person name="Tran-Gyamfi M."/>
            <person name="Aerts A."/>
            <person name="Altherr M."/>
            <person name="Ashworth L."/>
            <person name="Bajorek E."/>
            <person name="Black S."/>
            <person name="Branscomb E."/>
            <person name="Caenepeel S."/>
            <person name="Carrano A.V."/>
            <person name="Caoile C."/>
            <person name="Chan Y.M."/>
            <person name="Christensen M."/>
            <person name="Cleland C.A."/>
            <person name="Copeland A."/>
            <person name="Dalin E."/>
            <person name="Dehal P."/>
            <person name="Denys M."/>
            <person name="Detter J.C."/>
            <person name="Escobar J."/>
            <person name="Flowers D."/>
            <person name="Fotopulos D."/>
            <person name="Garcia C."/>
            <person name="Georgescu A.M."/>
            <person name="Glavina T."/>
            <person name="Gomez M."/>
            <person name="Gonzales E."/>
            <person name="Groza M."/>
            <person name="Hammon N."/>
            <person name="Hawkins T."/>
            <person name="Haydu L."/>
            <person name="Ho I."/>
            <person name="Huang W."/>
            <person name="Israni S."/>
            <person name="Jett J."/>
            <person name="Kadner K."/>
            <person name="Kimball H."/>
            <person name="Kobayashi A."/>
            <person name="Larionov V."/>
            <person name="Leem S.-H."/>
            <person name="Lopez F."/>
            <person name="Lou Y."/>
            <person name="Lowry S."/>
            <person name="Malfatti S."/>
            <person name="Martinez D."/>
            <person name="McCready P.M."/>
            <person name="Medina C."/>
            <person name="Morgan J."/>
            <person name="Nelson K."/>
            <person name="Nolan M."/>
            <person name="Ovcharenko I."/>
            <person name="Pitluck S."/>
            <person name="Pollard M."/>
            <person name="Popkie A.P."/>
            <person name="Predki P."/>
            <person name="Quan G."/>
            <person name="Ramirez L."/>
            <person name="Rash S."/>
            <person name="Retterer J."/>
            <person name="Rodriguez A."/>
            <person name="Rogers S."/>
            <person name="Salamov A."/>
            <person name="Salazar A."/>
            <person name="She X."/>
            <person name="Smith D."/>
            <person name="Slezak T."/>
            <person name="Solovyev V."/>
            <person name="Thayer N."/>
            <person name="Tice H."/>
            <person name="Tsai M."/>
            <person name="Ustaszewska A."/>
            <person name="Vo N."/>
            <person name="Wagner M."/>
            <person name="Wheeler J."/>
            <person name="Wu K."/>
            <person name="Xie G."/>
            <person name="Yang J."/>
            <person name="Dubchak I."/>
            <person name="Furey T.S."/>
            <person name="DeJong P."/>
            <person name="Dickson M."/>
            <person name="Gordon D."/>
            <person name="Eichler E.E."/>
            <person name="Pennacchio L.A."/>
            <person name="Richardson P."/>
            <person name="Stubbs L."/>
            <person name="Rokhsar D.S."/>
            <person name="Myers R.M."/>
            <person name="Rubin E.M."/>
            <person name="Lucas S.M."/>
        </authorList>
    </citation>
    <scope>NUCLEOTIDE SEQUENCE [LARGE SCALE GENOMIC DNA]</scope>
</reference>
<reference key="3">
    <citation type="submission" date="2005-07" db="EMBL/GenBank/DDBJ databases">
        <authorList>
            <person name="Mural R.J."/>
            <person name="Istrail S."/>
            <person name="Sutton G.G."/>
            <person name="Florea L."/>
            <person name="Halpern A.L."/>
            <person name="Mobarry C.M."/>
            <person name="Lippert R."/>
            <person name="Walenz B."/>
            <person name="Shatkay H."/>
            <person name="Dew I."/>
            <person name="Miller J.R."/>
            <person name="Flanigan M.J."/>
            <person name="Edwards N.J."/>
            <person name="Bolanos R."/>
            <person name="Fasulo D."/>
            <person name="Halldorsson B.V."/>
            <person name="Hannenhalli S."/>
            <person name="Turner R."/>
            <person name="Yooseph S."/>
            <person name="Lu F."/>
            <person name="Nusskern D.R."/>
            <person name="Shue B.C."/>
            <person name="Zheng X.H."/>
            <person name="Zhong F."/>
            <person name="Delcher A.L."/>
            <person name="Huson D.H."/>
            <person name="Kravitz S.A."/>
            <person name="Mouchard L."/>
            <person name="Reinert K."/>
            <person name="Remington K.A."/>
            <person name="Clark A.G."/>
            <person name="Waterman M.S."/>
            <person name="Eichler E.E."/>
            <person name="Adams M.D."/>
            <person name="Hunkapiller M.W."/>
            <person name="Myers E.W."/>
            <person name="Venter J.C."/>
        </authorList>
    </citation>
    <scope>NUCLEOTIDE SEQUENCE [LARGE SCALE GENOMIC DNA]</scope>
</reference>
<reference key="4">
    <citation type="journal article" date="2004" name="Genome Res.">
        <title>The status, quality, and expansion of the NIH full-length cDNA project: the Mammalian Gene Collection (MGC).</title>
        <authorList>
            <consortium name="The MGC Project Team"/>
        </authorList>
    </citation>
    <scope>NUCLEOTIDE SEQUENCE [LARGE SCALE MRNA] (ISOFORMS 1 AND 2)</scope>
    <source>
        <tissue>Retinoblastoma</tissue>
        <tissue>Skin</tissue>
        <tissue>Uterus</tissue>
    </source>
</reference>
<reference key="5">
    <citation type="journal article" date="2005" name="J. Biol. Chem.">
        <title>A mammalian chromatin remodeling complex with similarities to the yeast INO80 complex.</title>
        <authorList>
            <person name="Jin J."/>
            <person name="Cai Y."/>
            <person name="Yao T."/>
            <person name="Gottschalk A.J."/>
            <person name="Florens L."/>
            <person name="Swanson S.K."/>
            <person name="Gutierrez J.L."/>
            <person name="Coleman M.K."/>
            <person name="Workman J.L."/>
            <person name="Mushegian A."/>
            <person name="Washburn M.P."/>
            <person name="Conaway R.C."/>
            <person name="Conaway J.W."/>
        </authorList>
    </citation>
    <scope>IDENTIFICATION IN INO80 COMPLEX</scope>
    <scope>IDENTIFICATION BY MASS SPECTROMETRY</scope>
</reference>
<reference key="6">
    <citation type="journal article" date="2006" name="Apoptosis">
        <title>Apoptosis promoted by up-regulation of TFPT (TCF3 fusion partner) appears p53 independent, cell type restricted and cell density influenced.</title>
        <authorList>
            <person name="Franchini C."/>
            <person name="Fontana F."/>
            <person name="Minuzzo M."/>
            <person name="Babbio F."/>
            <person name="Privitera E."/>
        </authorList>
    </citation>
    <scope>POSSIBLE FUNCTION IN APOPTOSIS</scope>
</reference>
<reference key="7">
    <citation type="journal article" date="2006" name="Cell">
        <title>Global, in vivo, and site-specific phosphorylation dynamics in signaling networks.</title>
        <authorList>
            <person name="Olsen J.V."/>
            <person name="Blagoev B."/>
            <person name="Gnad F."/>
            <person name="Macek B."/>
            <person name="Kumar C."/>
            <person name="Mortensen P."/>
            <person name="Mann M."/>
        </authorList>
    </citation>
    <scope>PHOSPHORYLATION [LARGE SCALE ANALYSIS] AT SER-180; SER-249 AND SER-252</scope>
    <scope>IDENTIFICATION BY MASS SPECTROMETRY [LARGE SCALE ANALYSIS]</scope>
    <source>
        <tissue>Cervix carcinoma</tissue>
    </source>
</reference>
<reference key="8">
    <citation type="journal article" date="2008" name="J. Proteome Res.">
        <title>Combining protein-based IMAC, peptide-based IMAC, and MudPIT for efficient phosphoproteomic analysis.</title>
        <authorList>
            <person name="Cantin G.T."/>
            <person name="Yi W."/>
            <person name="Lu B."/>
            <person name="Park S.K."/>
            <person name="Xu T."/>
            <person name="Lee J.-D."/>
            <person name="Yates J.R. III"/>
        </authorList>
    </citation>
    <scope>PHOSPHORYLATION [LARGE SCALE ANALYSIS] AT SER-180</scope>
    <scope>IDENTIFICATION BY MASS SPECTROMETRY [LARGE SCALE ANALYSIS]</scope>
    <source>
        <tissue>Cervix carcinoma</tissue>
    </source>
</reference>
<reference key="9">
    <citation type="journal article" date="2008" name="Mol. Cell">
        <title>Distinct modes of regulation of the Uch37 deubiquitinating enzyme in the proteasome and in the Ino80 chromatin-remodeling complex.</title>
        <authorList>
            <person name="Yao T."/>
            <person name="Song L."/>
            <person name="Jin J."/>
            <person name="Cai Y."/>
            <person name="Takahashi H."/>
            <person name="Swanson S.K."/>
            <person name="Washburn M.P."/>
            <person name="Florens L."/>
            <person name="Conaway R.C."/>
            <person name="Cohen R.E."/>
            <person name="Conaway J.W."/>
        </authorList>
    </citation>
    <scope>IDENTIFICATION IN THE INO80 COMPLEX</scope>
    <scope>SUBCELLULAR LOCATION</scope>
    <scope>IDENTIFICATION BY MASS SPECTROMETRY</scope>
</reference>
<reference key="10">
    <citation type="journal article" date="2008" name="Proc. Natl. Acad. Sci. U.S.A.">
        <title>A quantitative atlas of mitotic phosphorylation.</title>
        <authorList>
            <person name="Dephoure N."/>
            <person name="Zhou C."/>
            <person name="Villen J."/>
            <person name="Beausoleil S.A."/>
            <person name="Bakalarski C.E."/>
            <person name="Elledge S.J."/>
            <person name="Gygi S.P."/>
        </authorList>
    </citation>
    <scope>PHOSPHORYLATION [LARGE SCALE ANALYSIS] AT SER-180; SER-188; SER-249 AND SER-252</scope>
    <scope>IDENTIFICATION BY MASS SPECTROMETRY [LARGE SCALE ANALYSIS]</scope>
    <source>
        <tissue>Cervix carcinoma</tissue>
    </source>
</reference>
<reference key="11">
    <citation type="journal article" date="2009" name="Anal. Chem.">
        <title>Lys-N and trypsin cover complementary parts of the phosphoproteome in a refined SCX-based approach.</title>
        <authorList>
            <person name="Gauci S."/>
            <person name="Helbig A.O."/>
            <person name="Slijper M."/>
            <person name="Krijgsveld J."/>
            <person name="Heck A.J."/>
            <person name="Mohammed S."/>
        </authorList>
    </citation>
    <scope>IDENTIFICATION BY MASS SPECTROMETRY [LARGE SCALE ANALYSIS]</scope>
</reference>
<reference key="12">
    <citation type="journal article" date="2010" name="Sci. Signal.">
        <title>Quantitative phosphoproteomics reveals widespread full phosphorylation site occupancy during mitosis.</title>
        <authorList>
            <person name="Olsen J.V."/>
            <person name="Vermeulen M."/>
            <person name="Santamaria A."/>
            <person name="Kumar C."/>
            <person name="Miller M.L."/>
            <person name="Jensen L.J."/>
            <person name="Gnad F."/>
            <person name="Cox J."/>
            <person name="Jensen T.S."/>
            <person name="Nigg E.A."/>
            <person name="Brunak S."/>
            <person name="Mann M."/>
        </authorList>
    </citation>
    <scope>PHOSPHORYLATION [LARGE SCALE ANALYSIS] AT SER-180; THR-207; SER-249 AND SER-252</scope>
    <scope>IDENTIFICATION BY MASS SPECTROMETRY [LARGE SCALE ANALYSIS]</scope>
    <source>
        <tissue>Cervix carcinoma</tissue>
    </source>
</reference>
<reference key="13">
    <citation type="journal article" date="2011" name="J. Biol. Chem.">
        <title>Subunit organization of the human INO80 chromatin remodeling complex: An evolutionarily conserved core complex catalyzes ATP-dependent nucleosome remodeling.</title>
        <authorList>
            <person name="Chen L."/>
            <person name="Cai Y."/>
            <person name="Jin J."/>
            <person name="Florens L."/>
            <person name="Swanson S.K."/>
            <person name="Washburn M.P."/>
            <person name="Conaway J.W."/>
            <person name="Conaway R.C."/>
        </authorList>
    </citation>
    <scope>IDENTIFICATION IN THE INO80 COMPLEX</scope>
</reference>
<reference key="14">
    <citation type="journal article" date="2011" name="Sci. Signal.">
        <title>System-wide temporal characterization of the proteome and phosphoproteome of human embryonic stem cell differentiation.</title>
        <authorList>
            <person name="Rigbolt K.T."/>
            <person name="Prokhorova T.A."/>
            <person name="Akimov V."/>
            <person name="Henningsen J."/>
            <person name="Johansen P.T."/>
            <person name="Kratchmarova I."/>
            <person name="Kassem M."/>
            <person name="Mann M."/>
            <person name="Olsen J.V."/>
            <person name="Blagoev B."/>
        </authorList>
    </citation>
    <scope>PHOSPHORYLATION [LARGE SCALE ANALYSIS] AT SER-249 AND SER-252</scope>
    <scope>IDENTIFICATION BY MASS SPECTROMETRY [LARGE SCALE ANALYSIS]</scope>
</reference>
<reference key="15">
    <citation type="journal article" date="2013" name="J. Proteome Res.">
        <title>Toward a comprehensive characterization of a human cancer cell phosphoproteome.</title>
        <authorList>
            <person name="Zhou H."/>
            <person name="Di Palma S."/>
            <person name="Preisinger C."/>
            <person name="Peng M."/>
            <person name="Polat A.N."/>
            <person name="Heck A.J."/>
            <person name="Mohammed S."/>
        </authorList>
    </citation>
    <scope>PHOSPHORYLATION [LARGE SCALE ANALYSIS] AT SER-167; SER-180; THR-207; SER-249 AND SER-252</scope>
    <scope>IDENTIFICATION BY MASS SPECTROMETRY [LARGE SCALE ANALYSIS]</scope>
    <source>
        <tissue>Cervix carcinoma</tissue>
        <tissue>Erythroleukemia</tissue>
    </source>
</reference>
<reference key="16">
    <citation type="journal article" date="2014" name="J. Proteomics">
        <title>An enzyme assisted RP-RPLC approach for in-depth analysis of human liver phosphoproteome.</title>
        <authorList>
            <person name="Bian Y."/>
            <person name="Song C."/>
            <person name="Cheng K."/>
            <person name="Dong M."/>
            <person name="Wang F."/>
            <person name="Huang J."/>
            <person name="Sun D."/>
            <person name="Wang L."/>
            <person name="Ye M."/>
            <person name="Zou H."/>
        </authorList>
    </citation>
    <scope>PHOSPHORYLATION [LARGE SCALE ANALYSIS] AT THR-172; SER-180 AND SER-252</scope>
    <scope>IDENTIFICATION BY MASS SPECTROMETRY [LARGE SCALE ANALYSIS]</scope>
    <source>
        <tissue>Liver</tissue>
    </source>
</reference>
<reference key="17">
    <citation type="journal article" date="2017" name="Nat. Struct. Mol. Biol.">
        <title>Site-specific mapping of the human SUMO proteome reveals co-modification with phosphorylation.</title>
        <authorList>
            <person name="Hendriks I.A."/>
            <person name="Lyon D."/>
            <person name="Young C."/>
            <person name="Jensen L.J."/>
            <person name="Vertegaal A.C."/>
            <person name="Nielsen M.L."/>
        </authorList>
    </citation>
    <scope>SUMOYLATION [LARGE SCALE ANALYSIS] AT LYS-216</scope>
    <scope>IDENTIFICATION BY MASS SPECTROMETRY [LARGE SCALE ANALYSIS]</scope>
</reference>